<name>MRAY_SOLM1</name>
<gene>
    <name evidence="1" type="primary">mraY</name>
    <name type="ordered locus">DMR_33300</name>
</gene>
<protein>
    <recommendedName>
        <fullName evidence="1">Phospho-N-acetylmuramoyl-pentapeptide-transferase</fullName>
        <ecNumber evidence="1">2.7.8.13</ecNumber>
    </recommendedName>
    <alternativeName>
        <fullName evidence="1">UDP-MurNAc-pentapeptide phosphotransferase</fullName>
    </alternativeName>
</protein>
<organism>
    <name type="scientific">Solidesulfovibrio magneticus (strain ATCC 700980 / DSM 13731 / RS-1)</name>
    <name type="common">Desulfovibrio magneticus</name>
    <dbReference type="NCBI Taxonomy" id="573370"/>
    <lineage>
        <taxon>Bacteria</taxon>
        <taxon>Pseudomonadati</taxon>
        <taxon>Thermodesulfobacteriota</taxon>
        <taxon>Desulfovibrionia</taxon>
        <taxon>Desulfovibrionales</taxon>
        <taxon>Desulfovibrionaceae</taxon>
        <taxon>Solidesulfovibrio</taxon>
    </lineage>
</organism>
<feature type="chain" id="PRO_1000202065" description="Phospho-N-acetylmuramoyl-pentapeptide-transferase">
    <location>
        <begin position="1"/>
        <end position="358"/>
    </location>
</feature>
<feature type="transmembrane region" description="Helical" evidence="1">
    <location>
        <begin position="27"/>
        <end position="47"/>
    </location>
</feature>
<feature type="transmembrane region" description="Helical" evidence="1">
    <location>
        <begin position="73"/>
        <end position="93"/>
    </location>
</feature>
<feature type="transmembrane region" description="Helical" evidence="1">
    <location>
        <begin position="97"/>
        <end position="117"/>
    </location>
</feature>
<feature type="transmembrane region" description="Helical" evidence="1">
    <location>
        <begin position="133"/>
        <end position="153"/>
    </location>
</feature>
<feature type="transmembrane region" description="Helical" evidence="1">
    <location>
        <begin position="165"/>
        <end position="185"/>
    </location>
</feature>
<feature type="transmembrane region" description="Helical" evidence="1">
    <location>
        <begin position="196"/>
        <end position="216"/>
    </location>
</feature>
<feature type="transmembrane region" description="Helical" evidence="1">
    <location>
        <begin position="233"/>
        <end position="253"/>
    </location>
</feature>
<feature type="transmembrane region" description="Helical" evidence="1">
    <location>
        <begin position="260"/>
        <end position="280"/>
    </location>
</feature>
<feature type="transmembrane region" description="Helical" evidence="1">
    <location>
        <begin position="285"/>
        <end position="305"/>
    </location>
</feature>
<feature type="transmembrane region" description="Helical" evidence="1">
    <location>
        <begin position="335"/>
        <end position="355"/>
    </location>
</feature>
<accession>C4XK72</accession>
<proteinExistence type="inferred from homology"/>
<dbReference type="EC" id="2.7.8.13" evidence="1"/>
<dbReference type="EMBL" id="AP010904">
    <property type="protein sequence ID" value="BAH76821.1"/>
    <property type="molecule type" value="Genomic_DNA"/>
</dbReference>
<dbReference type="RefSeq" id="WP_015861971.1">
    <property type="nucleotide sequence ID" value="NC_012796.1"/>
</dbReference>
<dbReference type="SMR" id="C4XK72"/>
<dbReference type="STRING" id="573370.DMR_33300"/>
<dbReference type="KEGG" id="dma:DMR_33300"/>
<dbReference type="eggNOG" id="COG0472">
    <property type="taxonomic scope" value="Bacteria"/>
</dbReference>
<dbReference type="HOGENOM" id="CLU_023982_0_0_7"/>
<dbReference type="OrthoDB" id="9805475at2"/>
<dbReference type="UniPathway" id="UPA00219"/>
<dbReference type="Proteomes" id="UP000009071">
    <property type="component" value="Chromosome"/>
</dbReference>
<dbReference type="GO" id="GO:0005886">
    <property type="term" value="C:plasma membrane"/>
    <property type="evidence" value="ECO:0007669"/>
    <property type="project" value="UniProtKB-SubCell"/>
</dbReference>
<dbReference type="GO" id="GO:0046872">
    <property type="term" value="F:metal ion binding"/>
    <property type="evidence" value="ECO:0007669"/>
    <property type="project" value="UniProtKB-KW"/>
</dbReference>
<dbReference type="GO" id="GO:0008963">
    <property type="term" value="F:phospho-N-acetylmuramoyl-pentapeptide-transferase activity"/>
    <property type="evidence" value="ECO:0007669"/>
    <property type="project" value="UniProtKB-UniRule"/>
</dbReference>
<dbReference type="GO" id="GO:0051992">
    <property type="term" value="F:UDP-N-acetylmuramoyl-L-alanyl-D-glutamyl-meso-2,6-diaminopimelyl-D-alanyl-D-alanine:undecaprenyl-phosphate transferase activity"/>
    <property type="evidence" value="ECO:0007669"/>
    <property type="project" value="RHEA"/>
</dbReference>
<dbReference type="GO" id="GO:0051301">
    <property type="term" value="P:cell division"/>
    <property type="evidence" value="ECO:0007669"/>
    <property type="project" value="UniProtKB-KW"/>
</dbReference>
<dbReference type="GO" id="GO:0071555">
    <property type="term" value="P:cell wall organization"/>
    <property type="evidence" value="ECO:0007669"/>
    <property type="project" value="UniProtKB-KW"/>
</dbReference>
<dbReference type="GO" id="GO:0009252">
    <property type="term" value="P:peptidoglycan biosynthetic process"/>
    <property type="evidence" value="ECO:0007669"/>
    <property type="project" value="UniProtKB-UniRule"/>
</dbReference>
<dbReference type="GO" id="GO:0008360">
    <property type="term" value="P:regulation of cell shape"/>
    <property type="evidence" value="ECO:0007669"/>
    <property type="project" value="UniProtKB-KW"/>
</dbReference>
<dbReference type="CDD" id="cd06852">
    <property type="entry name" value="GT_MraY"/>
    <property type="match status" value="1"/>
</dbReference>
<dbReference type="HAMAP" id="MF_00038">
    <property type="entry name" value="MraY"/>
    <property type="match status" value="1"/>
</dbReference>
<dbReference type="InterPro" id="IPR000715">
    <property type="entry name" value="Glycosyl_transferase_4"/>
</dbReference>
<dbReference type="InterPro" id="IPR003524">
    <property type="entry name" value="PNAcMuramoyl-5peptid_Trfase"/>
</dbReference>
<dbReference type="InterPro" id="IPR018480">
    <property type="entry name" value="PNAcMuramoyl-5peptid_Trfase_CS"/>
</dbReference>
<dbReference type="NCBIfam" id="TIGR00445">
    <property type="entry name" value="mraY"/>
    <property type="match status" value="1"/>
</dbReference>
<dbReference type="PANTHER" id="PTHR22926">
    <property type="entry name" value="PHOSPHO-N-ACETYLMURAMOYL-PENTAPEPTIDE-TRANSFERASE"/>
    <property type="match status" value="1"/>
</dbReference>
<dbReference type="PANTHER" id="PTHR22926:SF5">
    <property type="entry name" value="PHOSPHO-N-ACETYLMURAMOYL-PENTAPEPTIDE-TRANSFERASE HOMOLOG"/>
    <property type="match status" value="1"/>
</dbReference>
<dbReference type="Pfam" id="PF00953">
    <property type="entry name" value="Glycos_transf_4"/>
    <property type="match status" value="1"/>
</dbReference>
<dbReference type="Pfam" id="PF10555">
    <property type="entry name" value="MraY_sig1"/>
    <property type="match status" value="1"/>
</dbReference>
<dbReference type="PROSITE" id="PS01348">
    <property type="entry name" value="MRAY_2"/>
    <property type="match status" value="1"/>
</dbReference>
<comment type="function">
    <text evidence="1">Catalyzes the initial step of the lipid cycle reactions in the biosynthesis of the cell wall peptidoglycan: transfers peptidoglycan precursor phospho-MurNAc-pentapeptide from UDP-MurNAc-pentapeptide onto the lipid carrier undecaprenyl phosphate, yielding undecaprenyl-pyrophosphoryl-MurNAc-pentapeptide, known as lipid I.</text>
</comment>
<comment type="catalytic activity">
    <reaction evidence="1">
        <text>UDP-N-acetyl-alpha-D-muramoyl-L-alanyl-gamma-D-glutamyl-meso-2,6-diaminopimeloyl-D-alanyl-D-alanine + di-trans,octa-cis-undecaprenyl phosphate = di-trans,octa-cis-undecaprenyl diphospho-N-acetyl-alpha-D-muramoyl-L-alanyl-D-glutamyl-meso-2,6-diaminopimeloyl-D-alanyl-D-alanine + UMP</text>
        <dbReference type="Rhea" id="RHEA:28386"/>
        <dbReference type="ChEBI" id="CHEBI:57865"/>
        <dbReference type="ChEBI" id="CHEBI:60392"/>
        <dbReference type="ChEBI" id="CHEBI:61386"/>
        <dbReference type="ChEBI" id="CHEBI:61387"/>
        <dbReference type="EC" id="2.7.8.13"/>
    </reaction>
</comment>
<comment type="cofactor">
    <cofactor evidence="1">
        <name>Mg(2+)</name>
        <dbReference type="ChEBI" id="CHEBI:18420"/>
    </cofactor>
</comment>
<comment type="pathway">
    <text evidence="1">Cell wall biogenesis; peptidoglycan biosynthesis.</text>
</comment>
<comment type="subcellular location">
    <subcellularLocation>
        <location evidence="1">Cell inner membrane</location>
        <topology evidence="1">Multi-pass membrane protein</topology>
    </subcellularLocation>
</comment>
<comment type="similarity">
    <text evidence="1">Belongs to the glycosyltransferase 4 family. MraY subfamily.</text>
</comment>
<keyword id="KW-0131">Cell cycle</keyword>
<keyword id="KW-0132">Cell division</keyword>
<keyword id="KW-0997">Cell inner membrane</keyword>
<keyword id="KW-1003">Cell membrane</keyword>
<keyword id="KW-0133">Cell shape</keyword>
<keyword id="KW-0961">Cell wall biogenesis/degradation</keyword>
<keyword id="KW-0460">Magnesium</keyword>
<keyword id="KW-0472">Membrane</keyword>
<keyword id="KW-0479">Metal-binding</keyword>
<keyword id="KW-0573">Peptidoglycan synthesis</keyword>
<keyword id="KW-0808">Transferase</keyword>
<keyword id="KW-0812">Transmembrane</keyword>
<keyword id="KW-1133">Transmembrane helix</keyword>
<evidence type="ECO:0000255" key="1">
    <source>
        <dbReference type="HAMAP-Rule" id="MF_00038"/>
    </source>
</evidence>
<sequence>MIYYLLVPLVAHFSALNVFRYITFRSIAALLTALVLSIVFGPKFIDWLRRLKFGQYIHEDVAAHKQKAGTPTMGGLLIAFCIVVSVLLWGDLANEYVWMTLFVFLGFGALGYVDDHAKVVRKQNKGLTPKQKLLGQIVVSGVAAALLVLDPEYSTRLAVPFFKHLTPDLGLWYLPFAMLVMIGASNAVNLTDGLDGLAIGPMIVNAAMFGLFIYVAGHAQMARYLQVMPVSGVGEVTVFCGALVGAGLGFLWFNAYPAQIFMGDVGSLSLGGALGFLAVLCKQELLLIVVGGLYVAETVSVILQVGYFKMTGGKRIFRMAPLHHHFELMGVPESKIIIRFWILSILLALVGLSTLKLR</sequence>
<reference key="1">
    <citation type="journal article" date="2009" name="Genome Res.">
        <title>Whole genome sequence of Desulfovibrio magneticus strain RS-1 revealed common gene clusters in magnetotactic bacteria.</title>
        <authorList>
            <person name="Nakazawa H."/>
            <person name="Arakaki A."/>
            <person name="Narita-Yamada S."/>
            <person name="Yashiro I."/>
            <person name="Jinno K."/>
            <person name="Aoki N."/>
            <person name="Tsuruyama A."/>
            <person name="Okamura Y."/>
            <person name="Tanikawa S."/>
            <person name="Fujita N."/>
            <person name="Takeyama H."/>
            <person name="Matsunaga T."/>
        </authorList>
    </citation>
    <scope>NUCLEOTIDE SEQUENCE [LARGE SCALE GENOMIC DNA]</scope>
    <source>
        <strain>ATCC 700980 / DSM 13731 / RS-1</strain>
    </source>
</reference>